<name>RBS1_PETHY</name>
<gene>
    <name evidence="1" type="primary">RBCS1</name>
    <name type="synonym">RBCS</name>
</gene>
<organism>
    <name type="scientific">Petunia hybrida</name>
    <name type="common">Petunia</name>
    <dbReference type="NCBI Taxonomy" id="4102"/>
    <lineage>
        <taxon>Eukaryota</taxon>
        <taxon>Viridiplantae</taxon>
        <taxon>Streptophyta</taxon>
        <taxon>Embryophyta</taxon>
        <taxon>Tracheophyta</taxon>
        <taxon>Spermatophyta</taxon>
        <taxon>Magnoliopsida</taxon>
        <taxon>eudicotyledons</taxon>
        <taxon>Gunneridae</taxon>
        <taxon>Pentapetalae</taxon>
        <taxon>asterids</taxon>
        <taxon>lamiids</taxon>
        <taxon>Solanales</taxon>
        <taxon>Solanaceae</taxon>
        <taxon>Petunioideae</taxon>
        <taxon>Petunia</taxon>
    </lineage>
</organism>
<evidence type="ECO:0000255" key="1">
    <source>
        <dbReference type="HAMAP-Rule" id="MF_00860"/>
    </source>
</evidence>
<reference key="1">
    <citation type="journal article" date="1986" name="Nucleic Acids Res.">
        <title>The genes encoding the small subunit of ribulose-1,5-bisphosphate carboxylase are expressed differentially in petunia leaves.</title>
        <authorList>
            <person name="Tumer N.E."/>
            <person name="Clark W.G."/>
            <person name="Tabor G.J."/>
            <person name="Hironaka C.M."/>
            <person name="Fraley R.T."/>
            <person name="Shah D.M."/>
        </authorList>
    </citation>
    <scope>NUCLEOTIDE SEQUENCE [GENOMIC DNA]</scope>
    <source>
        <strain>cv. Mitchell</strain>
    </source>
</reference>
<comment type="function">
    <text evidence="1">RuBisCO catalyzes two reactions: the carboxylation of D-ribulose 1,5-bisphosphate, the primary event in carbon dioxide fixation, as well as the oxidative fragmentation of the pentose substrate. Both reactions occur simultaneously and in competition at the same active site. Although the small subunit is not catalytic it is essential for maximal activity.</text>
</comment>
<comment type="subunit">
    <text evidence="1">Heterohexadecamer of 8 large and 8 small subunits.</text>
</comment>
<comment type="subcellular location">
    <subcellularLocation>
        <location evidence="1">Plastid</location>
        <location evidence="1">Chloroplast</location>
    </subcellularLocation>
</comment>
<comment type="miscellaneous">
    <text evidence="1">The basic functional RuBisCO is composed of a large chain homodimer in a 'head-to-tail' conformation. In form I RuBisCO this homodimer is arranged in a barrel-like tetramer with the small subunits forming a tetrameric 'cap' on each end of the 'barrel'.</text>
</comment>
<comment type="similarity">
    <text evidence="1">Belongs to the RuBisCO small chain family.</text>
</comment>
<accession>P04714</accession>
<sequence length="180" mass="20370">MASSVISSAAVATRTNVAQASMVAPFNGLKSAVSFPVSSKQNLDITSIASNGGRVQCMQVWPPYGKKKYETLSYLPDLTDEQLLKEIEYLLNKGWVPCLEFETEHGFVYREYHASPRYYDGRYWTMWKLPMFGCTDATQVLGELQEAKKAYPNAWIRIIGFDNVRQVQCISFIAYKPPGF</sequence>
<keyword id="KW-0113">Calvin cycle</keyword>
<keyword id="KW-0120">Carbon dioxide fixation</keyword>
<keyword id="KW-0150">Chloroplast</keyword>
<keyword id="KW-0601">Photorespiration</keyword>
<keyword id="KW-0602">Photosynthesis</keyword>
<keyword id="KW-0934">Plastid</keyword>
<keyword id="KW-0809">Transit peptide</keyword>
<protein>
    <recommendedName>
        <fullName evidence="1">Ribulose bisphosphate carboxylase small subunit, chloroplastic 1</fullName>
        <shortName evidence="1">RuBisCO small subunit 1</shortName>
    </recommendedName>
    <alternativeName>
        <fullName>Ribulose bisphosphate carboxylase small chain SSU8, chloroplastic</fullName>
        <shortName>RuBisCO small subunit SSU8</shortName>
    </alternativeName>
</protein>
<proteinExistence type="inferred from homology"/>
<feature type="transit peptide" description="Chloroplast" evidence="1">
    <location>
        <begin position="1"/>
        <end position="56"/>
    </location>
</feature>
<feature type="chain" id="PRO_0000031543" description="Ribulose bisphosphate carboxylase small subunit, chloroplastic 1" evidence="1">
    <location>
        <begin position="57"/>
        <end position="180"/>
    </location>
</feature>
<dbReference type="EMBL" id="X03820">
    <property type="protein sequence ID" value="CAA27444.1"/>
    <property type="molecule type" value="Genomic_DNA"/>
</dbReference>
<dbReference type="SMR" id="P04714"/>
<dbReference type="GO" id="GO:0009507">
    <property type="term" value="C:chloroplast"/>
    <property type="evidence" value="ECO:0007669"/>
    <property type="project" value="UniProtKB-SubCell"/>
</dbReference>
<dbReference type="GO" id="GO:0016984">
    <property type="term" value="F:ribulose-bisphosphate carboxylase activity"/>
    <property type="evidence" value="ECO:0007669"/>
    <property type="project" value="UniProtKB-UniRule"/>
</dbReference>
<dbReference type="GO" id="GO:0009853">
    <property type="term" value="P:photorespiration"/>
    <property type="evidence" value="ECO:0007669"/>
    <property type="project" value="UniProtKB-KW"/>
</dbReference>
<dbReference type="GO" id="GO:0019253">
    <property type="term" value="P:reductive pentose-phosphate cycle"/>
    <property type="evidence" value="ECO:0007669"/>
    <property type="project" value="UniProtKB-UniRule"/>
</dbReference>
<dbReference type="CDD" id="cd03527">
    <property type="entry name" value="RuBisCO_small"/>
    <property type="match status" value="1"/>
</dbReference>
<dbReference type="FunFam" id="3.30.190.10:FF:000001">
    <property type="entry name" value="Ribulose bisphosphate carboxylase small chain, chloroplastic"/>
    <property type="match status" value="1"/>
</dbReference>
<dbReference type="Gene3D" id="3.30.190.10">
    <property type="entry name" value="Ribulose bisphosphate carboxylase, small subunit"/>
    <property type="match status" value="1"/>
</dbReference>
<dbReference type="HAMAP" id="MF_00859">
    <property type="entry name" value="RuBisCO_S_bact"/>
    <property type="match status" value="1"/>
</dbReference>
<dbReference type="InterPro" id="IPR024681">
    <property type="entry name" value="RuBisCO_ssu"/>
</dbReference>
<dbReference type="InterPro" id="IPR000894">
    <property type="entry name" value="RuBisCO_ssu_dom"/>
</dbReference>
<dbReference type="InterPro" id="IPR024680">
    <property type="entry name" value="RuBisCO_ssu_N"/>
</dbReference>
<dbReference type="InterPro" id="IPR036385">
    <property type="entry name" value="RuBisCO_ssu_sf"/>
</dbReference>
<dbReference type="PANTHER" id="PTHR31262">
    <property type="entry name" value="RIBULOSE BISPHOSPHATE CARBOXYLASE SMALL CHAIN 1, CHLOROPLASTIC"/>
    <property type="match status" value="1"/>
</dbReference>
<dbReference type="PANTHER" id="PTHR31262:SF10">
    <property type="entry name" value="RIBULOSE BISPHOSPHATE CARBOXYLASE SMALL SUBUNIT 1A, CHLOROPLASTIC-RELATED"/>
    <property type="match status" value="1"/>
</dbReference>
<dbReference type="Pfam" id="PF12338">
    <property type="entry name" value="RbcS"/>
    <property type="match status" value="1"/>
</dbReference>
<dbReference type="Pfam" id="PF00101">
    <property type="entry name" value="RuBisCO_small"/>
    <property type="match status" value="1"/>
</dbReference>
<dbReference type="PRINTS" id="PR00152">
    <property type="entry name" value="RUBISCOSMALL"/>
</dbReference>
<dbReference type="SMART" id="SM00961">
    <property type="entry name" value="RuBisCO_small"/>
    <property type="match status" value="1"/>
</dbReference>
<dbReference type="SUPFAM" id="SSF55239">
    <property type="entry name" value="RuBisCO, small subunit"/>
    <property type="match status" value="1"/>
</dbReference>